<dbReference type="EC" id="4.1.2.27" evidence="2"/>
<dbReference type="EMBL" id="CR861289">
    <property type="protein sequence ID" value="CAH93356.1"/>
    <property type="molecule type" value="mRNA"/>
</dbReference>
<dbReference type="RefSeq" id="NP_001126976.1">
    <property type="nucleotide sequence ID" value="NM_001133504.1"/>
</dbReference>
<dbReference type="SMR" id="Q5R4G0"/>
<dbReference type="STRING" id="9601.ENSPPYP00000002746"/>
<dbReference type="GeneID" id="100173995"/>
<dbReference type="KEGG" id="pon:100173995"/>
<dbReference type="CTD" id="8879"/>
<dbReference type="eggNOG" id="KOG1383">
    <property type="taxonomic scope" value="Eukaryota"/>
</dbReference>
<dbReference type="InParanoid" id="Q5R4G0"/>
<dbReference type="OrthoDB" id="10254570at2759"/>
<dbReference type="UniPathway" id="UPA00222"/>
<dbReference type="Proteomes" id="UP000001595">
    <property type="component" value="Unplaced"/>
</dbReference>
<dbReference type="GO" id="GO:0005783">
    <property type="term" value="C:endoplasmic reticulum"/>
    <property type="evidence" value="ECO:0000250"/>
    <property type="project" value="UniProtKB"/>
</dbReference>
<dbReference type="GO" id="GO:0005789">
    <property type="term" value="C:endoplasmic reticulum membrane"/>
    <property type="evidence" value="ECO:0007669"/>
    <property type="project" value="UniProtKB-SubCell"/>
</dbReference>
<dbReference type="GO" id="GO:0030170">
    <property type="term" value="F:pyridoxal phosphate binding"/>
    <property type="evidence" value="ECO:0007669"/>
    <property type="project" value="InterPro"/>
</dbReference>
<dbReference type="GO" id="GO:0008117">
    <property type="term" value="F:sphinganine-1-phosphate aldolase activity"/>
    <property type="evidence" value="ECO:0000250"/>
    <property type="project" value="UniProtKB"/>
</dbReference>
<dbReference type="GO" id="GO:0006915">
    <property type="term" value="P:apoptotic process"/>
    <property type="evidence" value="ECO:0007669"/>
    <property type="project" value="UniProtKB-KW"/>
</dbReference>
<dbReference type="GO" id="GO:0006631">
    <property type="term" value="P:fatty acid metabolic process"/>
    <property type="evidence" value="ECO:0000250"/>
    <property type="project" value="UniProtKB"/>
</dbReference>
<dbReference type="GO" id="GO:0030149">
    <property type="term" value="P:sphingolipid catabolic process"/>
    <property type="evidence" value="ECO:0000250"/>
    <property type="project" value="UniProtKB"/>
</dbReference>
<dbReference type="CDD" id="cd06450">
    <property type="entry name" value="DOPA_deC_like"/>
    <property type="match status" value="1"/>
</dbReference>
<dbReference type="FunFam" id="3.90.1150.10:FF:000020">
    <property type="entry name" value="Sphingosine-1-phosphate lyase 1"/>
    <property type="match status" value="1"/>
</dbReference>
<dbReference type="FunFam" id="6.10.140.2150:FF:000001">
    <property type="entry name" value="Sphingosine-1-phosphate lyase 1"/>
    <property type="match status" value="1"/>
</dbReference>
<dbReference type="FunFam" id="3.40.640.10:FF:000020">
    <property type="entry name" value="sphingosine-1-phosphate lyase 1"/>
    <property type="match status" value="1"/>
</dbReference>
<dbReference type="Gene3D" id="6.10.140.2150">
    <property type="match status" value="1"/>
</dbReference>
<dbReference type="Gene3D" id="3.90.1150.10">
    <property type="entry name" value="Aspartate Aminotransferase, domain 1"/>
    <property type="match status" value="1"/>
</dbReference>
<dbReference type="Gene3D" id="3.40.640.10">
    <property type="entry name" value="Type I PLP-dependent aspartate aminotransferase-like (Major domain)"/>
    <property type="match status" value="1"/>
</dbReference>
<dbReference type="InterPro" id="IPR050477">
    <property type="entry name" value="GrpII_AminoAcid_Decarb"/>
</dbReference>
<dbReference type="InterPro" id="IPR002129">
    <property type="entry name" value="PyrdxlP-dep_de-COase"/>
</dbReference>
<dbReference type="InterPro" id="IPR015424">
    <property type="entry name" value="PyrdxlP-dep_Trfase"/>
</dbReference>
<dbReference type="InterPro" id="IPR015421">
    <property type="entry name" value="PyrdxlP-dep_Trfase_major"/>
</dbReference>
<dbReference type="InterPro" id="IPR015422">
    <property type="entry name" value="PyrdxlP-dep_Trfase_small"/>
</dbReference>
<dbReference type="PANTHER" id="PTHR42735">
    <property type="match status" value="1"/>
</dbReference>
<dbReference type="PANTHER" id="PTHR42735:SF6">
    <property type="entry name" value="SPHINGOSINE-1-PHOSPHATE LYASE 1"/>
    <property type="match status" value="1"/>
</dbReference>
<dbReference type="Pfam" id="PF00282">
    <property type="entry name" value="Pyridoxal_deC"/>
    <property type="match status" value="1"/>
</dbReference>
<dbReference type="SUPFAM" id="SSF53383">
    <property type="entry name" value="PLP-dependent transferases"/>
    <property type="match status" value="1"/>
</dbReference>
<organism>
    <name type="scientific">Pongo abelii</name>
    <name type="common">Sumatran orangutan</name>
    <name type="synonym">Pongo pygmaeus abelii</name>
    <dbReference type="NCBI Taxonomy" id="9601"/>
    <lineage>
        <taxon>Eukaryota</taxon>
        <taxon>Metazoa</taxon>
        <taxon>Chordata</taxon>
        <taxon>Craniata</taxon>
        <taxon>Vertebrata</taxon>
        <taxon>Euteleostomi</taxon>
        <taxon>Mammalia</taxon>
        <taxon>Eutheria</taxon>
        <taxon>Euarchontoglires</taxon>
        <taxon>Primates</taxon>
        <taxon>Haplorrhini</taxon>
        <taxon>Catarrhini</taxon>
        <taxon>Hominidae</taxon>
        <taxon>Pongo</taxon>
    </lineage>
</organism>
<gene>
    <name evidence="2" type="primary">SGPL1</name>
</gene>
<keyword id="KW-0007">Acetylation</keyword>
<keyword id="KW-0053">Apoptosis</keyword>
<keyword id="KW-0256">Endoplasmic reticulum</keyword>
<keyword id="KW-0443">Lipid metabolism</keyword>
<keyword id="KW-0456">Lyase</keyword>
<keyword id="KW-0472">Membrane</keyword>
<keyword id="KW-0944">Nitration</keyword>
<keyword id="KW-0597">Phosphoprotein</keyword>
<keyword id="KW-0663">Pyridoxal phosphate</keyword>
<keyword id="KW-1185">Reference proteome</keyword>
<keyword id="KW-0735">Signal-anchor</keyword>
<keyword id="KW-0746">Sphingolipid metabolism</keyword>
<keyword id="KW-0812">Transmembrane</keyword>
<keyword id="KW-1133">Transmembrane helix</keyword>
<protein>
    <recommendedName>
        <fullName evidence="6">Sphingosine-1-phosphate lyase 1</fullName>
        <shortName>S1PL</shortName>
        <shortName>SP-lyase 1</shortName>
        <shortName>SPL</shortName>
        <shortName>SPL 1</shortName>
        <ecNumber evidence="2">4.1.2.27</ecNumber>
    </recommendedName>
    <alternativeName>
        <fullName>Sphingosine-1-phosphate aldolase</fullName>
    </alternativeName>
</protein>
<name>SGPL1_PONAB</name>
<accession>Q5R4G0</accession>
<feature type="chain" id="PRO_0000248943" description="Sphingosine-1-phosphate lyase 1">
    <location>
        <begin position="1"/>
        <end position="568"/>
    </location>
</feature>
<feature type="topological domain" description="Lumenal" evidence="5">
    <location>
        <begin position="1"/>
        <end position="41"/>
    </location>
</feature>
<feature type="transmembrane region" description="Helical; Signal-anchor for type III membrane protein" evidence="5">
    <location>
        <begin position="42"/>
        <end position="62"/>
    </location>
</feature>
<feature type="topological domain" description="Cytoplasmic" evidence="5">
    <location>
        <begin position="63"/>
        <end position="568"/>
    </location>
</feature>
<feature type="modified residue" description="N6-(pyridoxal phosphate)lysine; alternate" evidence="1">
    <location>
        <position position="353"/>
    </location>
</feature>
<feature type="modified residue" description="N6-acetyllysine; alternate" evidence="2">
    <location>
        <position position="353"/>
    </location>
</feature>
<feature type="modified residue" description="3'-nitrotyrosine" evidence="2">
    <location>
        <position position="356"/>
    </location>
</feature>
<feature type="modified residue" description="3'-nitrotyrosine" evidence="2">
    <location>
        <position position="366"/>
    </location>
</feature>
<feature type="modified residue" description="Phosphoserine" evidence="2">
    <location>
        <position position="564"/>
    </location>
</feature>
<reference key="1">
    <citation type="submission" date="2004-11" db="EMBL/GenBank/DDBJ databases">
        <authorList>
            <consortium name="The German cDNA consortium"/>
        </authorList>
    </citation>
    <scope>NUCLEOTIDE SEQUENCE [LARGE SCALE MRNA]</scope>
    <source>
        <tissue>Brain cortex</tissue>
    </source>
</reference>
<proteinExistence type="evidence at transcript level"/>
<sequence length="568" mass="63472">MPSTDLLTLKAFEPYLEILEVYSTKAKNYVNGHCTKYEPWQLIAWSVVWTLLIVWGYEFVFQPESLWSRFKKKCFKLTRKMPIIGRKIQDKLNKTKDDISKNMSFLKVDKEYVKALPSQGLSSSAVLEKLKEYSSMDAFWQEGRASGTVYSGEEKLTELLVKAYGDFAWSNPLHPDIFPGLRKIEAEIVRIACSLFNGGPDSCGCVTSGGTESILMACKAYRDLAFEKGIKTSEIVAPQSAHAAFNKAASYFGMKIVRVPLTKMMEVDVRAMRRAISRNTAMLVCSTPQFPHGVIDPVPEVAKLAVKYKIPLHVDACLGGFLTVFMEKAGYPLEHPFDFRVKGVTSISADTHKYGYAPKGSSLVLYSDKKYRNYQFFVDTDWQGGIYASPTIAGSRPGGISAACWAALMHFGENGYVEATKQIIKTARFLKSELENIKGIFVFGNPQLSVIALGSRDFDIYRLSNLMTAKGWNLNQLQFPPSIHFCITLLHARKRVAIQFLKDIRESVTQIMKNPKAKTTGMGAIYGMAQTTVDRNMVAELSSVFLDSLYSTDTVTQGSQMNGSPKPH</sequence>
<comment type="function">
    <text evidence="2 3 4">Cleaves phosphorylated sphingoid bases (PSBs), such as sphingosine-1-phosphate, into fatty aldehydes and phosphoethanolamine. Elevates stress-induced ceramide production and apoptosis (By similarity). Required for global lipid homeostasis in liver and cholesterol homeostasis in fibroblasts. Involved in the regulation of pro-inflammatory response and neutrophil trafficking. Modulates neuronal autophagy via phosphoethanolamine production which regulates accumulation of aggregate-prone proteins such as APP (By similarity). Seems to play a role in establishing neuronal contact sites and axonal maintenance (By similarity).</text>
</comment>
<comment type="catalytic activity">
    <reaction evidence="2">
        <text>sphinganine 1-phosphate = hexadecanal + phosphoethanolamine</text>
        <dbReference type="Rhea" id="RHEA:18593"/>
        <dbReference type="ChEBI" id="CHEBI:17600"/>
        <dbReference type="ChEBI" id="CHEBI:57939"/>
        <dbReference type="ChEBI" id="CHEBI:58190"/>
        <dbReference type="EC" id="4.1.2.27"/>
    </reaction>
</comment>
<comment type="catalytic activity">
    <reaction evidence="2">
        <text>sphing-4-enine 1-phosphate = (2E)-hexadecenal + phosphoethanolamine</text>
        <dbReference type="Rhea" id="RHEA:33507"/>
        <dbReference type="ChEBI" id="CHEBI:17585"/>
        <dbReference type="ChEBI" id="CHEBI:58190"/>
        <dbReference type="ChEBI" id="CHEBI:60119"/>
        <dbReference type="EC" id="4.1.2.27"/>
    </reaction>
</comment>
<comment type="cofactor">
    <cofactor evidence="2">
        <name>pyridoxal 5'-phosphate</name>
        <dbReference type="ChEBI" id="CHEBI:597326"/>
    </cofactor>
</comment>
<comment type="pathway">
    <text evidence="2">Lipid metabolism; sphingolipid metabolism.</text>
</comment>
<comment type="subunit">
    <text evidence="2">Homodimer.</text>
</comment>
<comment type="subcellular location">
    <subcellularLocation>
        <location evidence="2">Endoplasmic reticulum membrane</location>
        <topology evidence="5">Single-pass type III membrane protein</topology>
        <orientation evidence="3">Cytoplasmic side</orientation>
    </subcellularLocation>
</comment>
<comment type="similarity">
    <text evidence="6">Belongs to the group II decarboxylase family. Sphingosine-1-phosphate lyase subfamily.</text>
</comment>
<evidence type="ECO:0000250" key="1"/>
<evidence type="ECO:0000250" key="2">
    <source>
        <dbReference type="UniProtKB" id="O95470"/>
    </source>
</evidence>
<evidence type="ECO:0000250" key="3">
    <source>
        <dbReference type="UniProtKB" id="Q8R0X7"/>
    </source>
</evidence>
<evidence type="ECO:0000250" key="4">
    <source>
        <dbReference type="UniProtKB" id="Q9V7Y2"/>
    </source>
</evidence>
<evidence type="ECO:0000255" key="5"/>
<evidence type="ECO:0000305" key="6"/>